<proteinExistence type="evidence at protein level"/>
<feature type="signal peptide" evidence="5">
    <location>
        <begin position="1"/>
        <end position="26"/>
    </location>
</feature>
<feature type="chain" id="PRO_0000168804" description="Iron uptake system component EfeO">
    <location>
        <begin position="27"/>
        <end position="375"/>
    </location>
</feature>
<feature type="strand" evidence="6">
    <location>
        <begin position="31"/>
        <end position="36"/>
    </location>
</feature>
<feature type="strand" evidence="6">
    <location>
        <begin position="41"/>
        <end position="59"/>
    </location>
</feature>
<feature type="strand" evidence="6">
    <location>
        <begin position="61"/>
        <end position="63"/>
    </location>
</feature>
<feature type="strand" evidence="6">
    <location>
        <begin position="65"/>
        <end position="71"/>
    </location>
</feature>
<feature type="strand" evidence="6">
    <location>
        <begin position="74"/>
        <end position="82"/>
    </location>
</feature>
<feature type="strand" evidence="6">
    <location>
        <begin position="87"/>
        <end position="94"/>
    </location>
</feature>
<feature type="strand" evidence="6">
    <location>
        <begin position="96"/>
        <end position="101"/>
    </location>
</feature>
<feature type="strand" evidence="6">
    <location>
        <begin position="111"/>
        <end position="116"/>
    </location>
</feature>
<feature type="helix" evidence="6">
    <location>
        <begin position="120"/>
        <end position="130"/>
    </location>
</feature>
<feature type="helix" evidence="6">
    <location>
        <begin position="133"/>
        <end position="162"/>
    </location>
</feature>
<feature type="helix" evidence="6">
    <location>
        <begin position="166"/>
        <end position="182"/>
    </location>
</feature>
<feature type="helix" evidence="6">
    <location>
        <begin position="184"/>
        <end position="187"/>
    </location>
</feature>
<feature type="helix" evidence="6">
    <location>
        <begin position="191"/>
        <end position="198"/>
    </location>
</feature>
<feature type="helix" evidence="6">
    <location>
        <begin position="201"/>
        <end position="203"/>
    </location>
</feature>
<feature type="helix" evidence="6">
    <location>
        <begin position="207"/>
        <end position="209"/>
    </location>
</feature>
<feature type="helix" evidence="6">
    <location>
        <begin position="216"/>
        <end position="224"/>
    </location>
</feature>
<feature type="helix" evidence="6">
    <location>
        <begin position="233"/>
        <end position="252"/>
    </location>
</feature>
<feature type="helix" evidence="6">
    <location>
        <begin position="257"/>
        <end position="273"/>
    </location>
</feature>
<feature type="turn" evidence="6">
    <location>
        <begin position="274"/>
        <end position="278"/>
    </location>
</feature>
<feature type="turn" evidence="6">
    <location>
        <begin position="282"/>
        <end position="284"/>
    </location>
</feature>
<feature type="helix" evidence="6">
    <location>
        <begin position="287"/>
        <end position="304"/>
    </location>
</feature>
<feature type="helix" evidence="6">
    <location>
        <begin position="306"/>
        <end position="312"/>
    </location>
</feature>
<feature type="helix" evidence="6">
    <location>
        <begin position="314"/>
        <end position="331"/>
    </location>
</feature>
<feature type="helix" evidence="6">
    <location>
        <begin position="332"/>
        <end position="334"/>
    </location>
</feature>
<feature type="strand" evidence="6">
    <location>
        <begin position="337"/>
        <end position="340"/>
    </location>
</feature>
<feature type="helix" evidence="6">
    <location>
        <begin position="343"/>
        <end position="345"/>
    </location>
</feature>
<feature type="helix" evidence="6">
    <location>
        <begin position="348"/>
        <end position="365"/>
    </location>
</feature>
<feature type="helix" evidence="6">
    <location>
        <begin position="368"/>
        <end position="371"/>
    </location>
</feature>
<gene>
    <name type="primary">efeO</name>
    <name type="synonym">ycdO</name>
    <name type="ordered locus">b1018</name>
    <name type="ordered locus">JW1003</name>
</gene>
<accession>P0AB24</accession>
<accession>P75902</accession>
<accession>Q9R2S4</accession>
<evidence type="ECO:0000269" key="1">
    <source>
    </source>
</evidence>
<evidence type="ECO:0000269" key="2">
    <source>
    </source>
</evidence>
<evidence type="ECO:0000269" key="3">
    <source>
    </source>
</evidence>
<evidence type="ECO:0000269" key="4">
    <source>
    </source>
</evidence>
<evidence type="ECO:0000305" key="5"/>
<evidence type="ECO:0007829" key="6">
    <source>
        <dbReference type="PDB" id="7WGU"/>
    </source>
</evidence>
<sequence>MTINFRRNALQLSVAALFSSAFMANAADVPQVKVTVTDKQCEPMTITVNAGKTQFIIQNHSQKALEWEILKGVMVVEERENIAPGFSQKMTANLQPGEYDMTCGLLTNPKGKLIVKGEATADAAQSDALLSLGGAITAYKAYVMAETTQLVTDTKAFTDAIKAGDIEKAKALYAPTRQHYERIEPIAELFSDLDGSIDAREDDYEQKAADPKFTGFHRLEKALFGDNTTKGMDQYAEQLYTDVVDLQKRISELAFPPSKVVGGAAGLIEEVAASKISGEEDRYSHTDLWDFQANVEGSQKIVDLLRPQLQKANPELLAKVDANFKKVDTILAKYRTKDGFETYDKLTDADRNALKGPITALAEDLAQLRGVLGLD</sequence>
<organism>
    <name type="scientific">Escherichia coli (strain K12)</name>
    <dbReference type="NCBI Taxonomy" id="83333"/>
    <lineage>
        <taxon>Bacteria</taxon>
        <taxon>Pseudomonadati</taxon>
        <taxon>Pseudomonadota</taxon>
        <taxon>Gammaproteobacteria</taxon>
        <taxon>Enterobacterales</taxon>
        <taxon>Enterobacteriaceae</taxon>
        <taxon>Escherichia</taxon>
    </lineage>
</organism>
<name>EFEO_ECOLI</name>
<reference key="1">
    <citation type="journal article" date="1996" name="DNA Res.">
        <title>A 718-kb DNA sequence of the Escherichia coli K-12 genome corresponding to the 12.7-28.0 min region on the linkage map.</title>
        <authorList>
            <person name="Oshima T."/>
            <person name="Aiba H."/>
            <person name="Baba T."/>
            <person name="Fujita K."/>
            <person name="Hayashi K."/>
            <person name="Honjo A."/>
            <person name="Ikemoto K."/>
            <person name="Inada T."/>
            <person name="Itoh T."/>
            <person name="Kajihara M."/>
            <person name="Kanai K."/>
            <person name="Kashimoto K."/>
            <person name="Kimura S."/>
            <person name="Kitagawa M."/>
            <person name="Makino K."/>
            <person name="Masuda S."/>
            <person name="Miki T."/>
            <person name="Mizobuchi K."/>
            <person name="Mori H."/>
            <person name="Motomura K."/>
            <person name="Nakamura Y."/>
            <person name="Nashimoto H."/>
            <person name="Nishio Y."/>
            <person name="Saito N."/>
            <person name="Sampei G."/>
            <person name="Seki Y."/>
            <person name="Tagami H."/>
            <person name="Takemoto K."/>
            <person name="Wada C."/>
            <person name="Yamamoto Y."/>
            <person name="Yano M."/>
            <person name="Horiuchi T."/>
        </authorList>
    </citation>
    <scope>NUCLEOTIDE SEQUENCE [LARGE SCALE GENOMIC DNA]</scope>
    <source>
        <strain>K12 / W3110 / ATCC 27325 / DSM 5911</strain>
    </source>
</reference>
<reference key="2">
    <citation type="journal article" date="1997" name="Science">
        <title>The complete genome sequence of Escherichia coli K-12.</title>
        <authorList>
            <person name="Blattner F.R."/>
            <person name="Plunkett G. III"/>
            <person name="Bloch C.A."/>
            <person name="Perna N.T."/>
            <person name="Burland V."/>
            <person name="Riley M."/>
            <person name="Collado-Vides J."/>
            <person name="Glasner J.D."/>
            <person name="Rode C.K."/>
            <person name="Mayhew G.F."/>
            <person name="Gregor J."/>
            <person name="Davis N.W."/>
            <person name="Kirkpatrick H.A."/>
            <person name="Goeden M.A."/>
            <person name="Rose D.J."/>
            <person name="Mau B."/>
            <person name="Shao Y."/>
        </authorList>
    </citation>
    <scope>NUCLEOTIDE SEQUENCE [LARGE SCALE GENOMIC DNA]</scope>
    <source>
        <strain>K12 / MG1655 / ATCC 47076</strain>
    </source>
</reference>
<reference key="3">
    <citation type="journal article" date="2006" name="Mol. Syst. Biol.">
        <title>Highly accurate genome sequences of Escherichia coli K-12 strains MG1655 and W3110.</title>
        <authorList>
            <person name="Hayashi K."/>
            <person name="Morooka N."/>
            <person name="Yamamoto Y."/>
            <person name="Fujita K."/>
            <person name="Isono K."/>
            <person name="Choi S."/>
            <person name="Ohtsubo E."/>
            <person name="Baba T."/>
            <person name="Wanner B.L."/>
            <person name="Mori H."/>
            <person name="Horiuchi T."/>
        </authorList>
    </citation>
    <scope>NUCLEOTIDE SEQUENCE [LARGE SCALE GENOMIC DNA]</scope>
    <source>
        <strain>K12 / W3110 / ATCC 27325 / DSM 5911</strain>
    </source>
</reference>
<reference key="4">
    <citation type="journal article" date="1999" name="Electrophoresis">
        <title>Enrichment of low abundance proteins of Escherichia coli by hydroxyapatite chromatography.</title>
        <authorList>
            <person name="Fountoulakis M."/>
            <person name="Takacs M.-F."/>
            <person name="Berndt P."/>
            <person name="Langen H."/>
            <person name="Takacs B."/>
        </authorList>
    </citation>
    <scope>IDENTIFICATION BY MASS SPECTROMETRY</scope>
    <source>
        <strain>B / BL21</strain>
    </source>
</reference>
<reference key="5">
    <citation type="journal article" date="2003" name="J. Biol. Chem.">
        <title>Global iron-dependent gene regulation in Escherichia coli. A new mechanism for iron homeostasis.</title>
        <authorList>
            <person name="McHugh J.P."/>
            <person name="Rodriguez-Quinones F."/>
            <person name="Abdul-Tehrani H."/>
            <person name="Svistunenko D.A."/>
            <person name="Poole R.K."/>
            <person name="Cooper C.E."/>
            <person name="Andrews S.C."/>
        </authorList>
    </citation>
    <scope>INDUCTION</scope>
    <source>
        <strain>K12 / MC4100 / ATCC 35695 / DSM 6574</strain>
    </source>
</reference>
<reference key="6">
    <citation type="journal article" date="2006" name="J. Biol. Chem.">
        <title>YcdB from Escherichia coli reveals a novel class of Tat-dependently translocated hemoproteins.</title>
        <authorList>
            <person name="Sturm A."/>
            <person name="Schierhorn A."/>
            <person name="Lindenstrauss U."/>
            <person name="Lilie H."/>
            <person name="Brueser T."/>
        </authorList>
    </citation>
    <scope>SUBUNIT</scope>
    <scope>IDENTIFICATION BY MASS SPECTROMETRY</scope>
    <scope>SUBCELLULAR LOCATION</scope>
    <source>
        <strain>K12 / MC4100 / ATCC 35695 / DSM 6574</strain>
    </source>
</reference>
<reference key="7">
    <citation type="journal article" date="2007" name="Mol. Microbiol.">
        <title>EfeUOB (YcdNOB) is a tripartite, acid-induced and CpxAR-regulated, low-pH Fe2+ transporter that is cryptic in Escherichia coli K-12 but functional in E. coli O157:H7.</title>
        <authorList>
            <person name="Cao J."/>
            <person name="Woodhall M.R."/>
            <person name="Alvarez J."/>
            <person name="Cartron M.L."/>
            <person name="Andrews S.C."/>
        </authorList>
    </citation>
    <scope>INDUCTION</scope>
    <scope>SUBUNIT</scope>
    <scope>LACK OF ACTIVITY IN STRAIN K12</scope>
    <source>
        <strain>K12</strain>
    </source>
</reference>
<reference key="8">
    <citation type="journal article" date="2010" name="BioMetals">
        <title>EfeO-cupredoxins: major new members of the cupredoxin superfamily with roles in bacterial iron transport.</title>
        <authorList>
            <person name="Rajasekaran M.B."/>
            <person name="Nilapwar S."/>
            <person name="Andrews S.C."/>
            <person name="Watson K.A."/>
        </authorList>
    </citation>
    <scope>FUNCTION</scope>
    <scope>DOMAIN</scope>
    <source>
        <strain>K12</strain>
    </source>
</reference>
<keyword id="KW-0002">3D-structure</keyword>
<keyword id="KW-0574">Periplasm</keyword>
<keyword id="KW-1185">Reference proteome</keyword>
<keyword id="KW-0732">Signal</keyword>
<comment type="function">
    <text evidence="4">Involved in Fe(2+) uptake. Could be an iron-binding and/or electron-transfer component.</text>
</comment>
<comment type="subunit">
    <text evidence="2 3">Monomer. Part of a ferrous iron transporter composed of EfeU, EfeO and EfeB. However, this EfeUOB tripartite iron transporter is defective in E.coli strain K12 due to a frameshift mutation in EfeU.</text>
</comment>
<comment type="subcellular location">
    <subcellularLocation>
        <location evidence="2">Periplasm</location>
    </subcellularLocation>
</comment>
<comment type="induction">
    <text evidence="1 3">Repressed by Fur in the presence of iron. Repressed at high pH by the two-component regulatory system CpxA/CpxR.</text>
</comment>
<comment type="domain">
    <text evidence="4">Contains an N-terminal Cup-like domain and a C-terminal peptidase domain, separated by a flexible linker. Structural modeling identifies 2 potential metal-binding sites in the Cup-like domain, with site I binding Cu(2+) and site II favoring Fe(3+). The peptidase domain may also contain an iron-binding site.</text>
</comment>
<comment type="similarity">
    <text evidence="5">Belongs to the EfeM/EfeO family.</text>
</comment>
<protein>
    <recommendedName>
        <fullName>Iron uptake system component EfeO</fullName>
    </recommendedName>
</protein>
<dbReference type="EMBL" id="U00096">
    <property type="protein sequence ID" value="AAC74103.1"/>
    <property type="molecule type" value="Genomic_DNA"/>
</dbReference>
<dbReference type="EMBL" id="AP009048">
    <property type="protein sequence ID" value="BAA35795.2"/>
    <property type="molecule type" value="Genomic_DNA"/>
</dbReference>
<dbReference type="PIR" id="H64843">
    <property type="entry name" value="H64843"/>
</dbReference>
<dbReference type="RefSeq" id="NP_415537.1">
    <property type="nucleotide sequence ID" value="NC_000913.3"/>
</dbReference>
<dbReference type="RefSeq" id="WP_000154398.1">
    <property type="nucleotide sequence ID" value="NZ_LN832404.1"/>
</dbReference>
<dbReference type="PDB" id="7WGU">
    <property type="method" value="X-ray"/>
    <property type="resolution" value="1.85 A"/>
    <property type="chains" value="A/B=27-375"/>
</dbReference>
<dbReference type="PDBsum" id="7WGU"/>
<dbReference type="SMR" id="P0AB24"/>
<dbReference type="BioGRID" id="4260053">
    <property type="interactions" value="25"/>
</dbReference>
<dbReference type="FunCoup" id="P0AB24">
    <property type="interactions" value="34"/>
</dbReference>
<dbReference type="IntAct" id="P0AB24">
    <property type="interactions" value="7"/>
</dbReference>
<dbReference type="STRING" id="511145.b1018"/>
<dbReference type="TCDB" id="2.A.108.2.3">
    <property type="family name" value="the iron/lead transporter (ilt) family"/>
</dbReference>
<dbReference type="jPOST" id="P0AB24"/>
<dbReference type="PaxDb" id="511145-b1018"/>
<dbReference type="EnsemblBacteria" id="AAC74103">
    <property type="protein sequence ID" value="AAC74103"/>
    <property type="gene ID" value="b1018"/>
</dbReference>
<dbReference type="GeneID" id="93776391"/>
<dbReference type="GeneID" id="945603"/>
<dbReference type="KEGG" id="ecj:JW1003"/>
<dbReference type="KEGG" id="eco:b1018"/>
<dbReference type="KEGG" id="ecoc:C3026_06190"/>
<dbReference type="PATRIC" id="fig|1411691.4.peg.1251"/>
<dbReference type="EchoBASE" id="EB3621"/>
<dbReference type="eggNOG" id="COG2822">
    <property type="taxonomic scope" value="Bacteria"/>
</dbReference>
<dbReference type="HOGENOM" id="CLU_050342_2_1_6"/>
<dbReference type="InParanoid" id="P0AB24"/>
<dbReference type="OMA" id="WTGWHRL"/>
<dbReference type="OrthoDB" id="7348379at2"/>
<dbReference type="PhylomeDB" id="P0AB24"/>
<dbReference type="BioCyc" id="EcoCyc:G6527-MONOMER"/>
<dbReference type="BioCyc" id="MetaCyc:G6527-MONOMER"/>
<dbReference type="PHI-base" id="PHI:10991"/>
<dbReference type="PRO" id="PR:P0AB24"/>
<dbReference type="Proteomes" id="UP000000625">
    <property type="component" value="Chromosome"/>
</dbReference>
<dbReference type="GO" id="GO:0030288">
    <property type="term" value="C:outer membrane-bounded periplasmic space"/>
    <property type="evidence" value="ECO:0000315"/>
    <property type="project" value="EcoCyc"/>
</dbReference>
<dbReference type="GO" id="GO:0046677">
    <property type="term" value="P:response to antibiotic"/>
    <property type="evidence" value="ECO:0000315"/>
    <property type="project" value="EcoCyc"/>
</dbReference>
<dbReference type="GO" id="GO:0006979">
    <property type="term" value="P:response to oxidative stress"/>
    <property type="evidence" value="ECO:0000315"/>
    <property type="project" value="EcoCyc"/>
</dbReference>
<dbReference type="GO" id="GO:0009636">
    <property type="term" value="P:response to toxic substance"/>
    <property type="evidence" value="ECO:0000315"/>
    <property type="project" value="EcoCyc"/>
</dbReference>
<dbReference type="GO" id="GO:0009411">
    <property type="term" value="P:response to UV"/>
    <property type="evidence" value="ECO:0000315"/>
    <property type="project" value="EcoCyc"/>
</dbReference>
<dbReference type="CDD" id="cd14656">
    <property type="entry name" value="Imelysin-like_EfeO"/>
    <property type="match status" value="1"/>
</dbReference>
<dbReference type="FunFam" id="1.20.1420.20:FF:000001">
    <property type="entry name" value="Iron uptake system component EfeO"/>
    <property type="match status" value="1"/>
</dbReference>
<dbReference type="FunFam" id="2.60.40.420:FF:000052">
    <property type="entry name" value="Iron uptake system component EfeO"/>
    <property type="match status" value="1"/>
</dbReference>
<dbReference type="Gene3D" id="2.60.40.420">
    <property type="entry name" value="Cupredoxins - blue copper proteins"/>
    <property type="match status" value="1"/>
</dbReference>
<dbReference type="Gene3D" id="1.20.1420.20">
    <property type="entry name" value="M75 peptidase, HXXE motif"/>
    <property type="match status" value="1"/>
</dbReference>
<dbReference type="InterPro" id="IPR008972">
    <property type="entry name" value="Cupredoxin"/>
</dbReference>
<dbReference type="InterPro" id="IPR050894">
    <property type="entry name" value="EfeM/EfeO_iron_uptake"/>
</dbReference>
<dbReference type="InterPro" id="IPR028096">
    <property type="entry name" value="EfeO_Cupredoxin"/>
</dbReference>
<dbReference type="InterPro" id="IPR018976">
    <property type="entry name" value="Imelysin-like"/>
</dbReference>
<dbReference type="InterPro" id="IPR034981">
    <property type="entry name" value="Imelysin-like_EfeO/Algp7"/>
</dbReference>
<dbReference type="InterPro" id="IPR038352">
    <property type="entry name" value="Imelysin_sf"/>
</dbReference>
<dbReference type="InterPro" id="IPR053377">
    <property type="entry name" value="Iron_uptake_EfeM/EfeO"/>
</dbReference>
<dbReference type="NCBIfam" id="NF041757">
    <property type="entry name" value="EfeO"/>
    <property type="match status" value="1"/>
</dbReference>
<dbReference type="NCBIfam" id="NF007697">
    <property type="entry name" value="PRK10378.1"/>
    <property type="match status" value="1"/>
</dbReference>
<dbReference type="PANTHER" id="PTHR39192">
    <property type="entry name" value="IRON UPTAKE SYSTEM COMPONENT EFEO"/>
    <property type="match status" value="1"/>
</dbReference>
<dbReference type="PANTHER" id="PTHR39192:SF1">
    <property type="entry name" value="IRON UPTAKE SYSTEM COMPONENT EFEO"/>
    <property type="match status" value="1"/>
</dbReference>
<dbReference type="Pfam" id="PF13473">
    <property type="entry name" value="Cupredoxin_1"/>
    <property type="match status" value="1"/>
</dbReference>
<dbReference type="Pfam" id="PF09375">
    <property type="entry name" value="Peptidase_M75"/>
    <property type="match status" value="1"/>
</dbReference>
<dbReference type="SUPFAM" id="SSF49503">
    <property type="entry name" value="Cupredoxins"/>
    <property type="match status" value="1"/>
</dbReference>